<sequence>MVGLPTHTLSVLVEDTPGVLARVAALFSRRGFNIESLAVGATECKTMSRMTIVVSAEETPLEQVTKQLHKLINVIKVVEQEADNSLSRELALIKVRAEAGTRSQVIEAVHLFRARVIDVSLESLTVEATGDCSKIEALLRVLEPFGVREIVQSGVVSLSRGPRGIGTVR</sequence>
<reference key="1">
    <citation type="journal article" date="2001" name="Nature">
        <title>Massive gene decay in the leprosy bacillus.</title>
        <authorList>
            <person name="Cole S.T."/>
            <person name="Eiglmeier K."/>
            <person name="Parkhill J."/>
            <person name="James K.D."/>
            <person name="Thomson N.R."/>
            <person name="Wheeler P.R."/>
            <person name="Honore N."/>
            <person name="Garnier T."/>
            <person name="Churcher C.M."/>
            <person name="Harris D.E."/>
            <person name="Mungall K.L."/>
            <person name="Basham D."/>
            <person name="Brown D."/>
            <person name="Chillingworth T."/>
            <person name="Connor R."/>
            <person name="Davies R.M."/>
            <person name="Devlin K."/>
            <person name="Duthoy S."/>
            <person name="Feltwell T."/>
            <person name="Fraser A."/>
            <person name="Hamlin N."/>
            <person name="Holroyd S."/>
            <person name="Hornsby T."/>
            <person name="Jagels K."/>
            <person name="Lacroix C."/>
            <person name="Maclean J."/>
            <person name="Moule S."/>
            <person name="Murphy L.D."/>
            <person name="Oliver K."/>
            <person name="Quail M.A."/>
            <person name="Rajandream M.A."/>
            <person name="Rutherford K.M."/>
            <person name="Rutter S."/>
            <person name="Seeger K."/>
            <person name="Simon S."/>
            <person name="Simmonds M."/>
            <person name="Skelton J."/>
            <person name="Squares R."/>
            <person name="Squares S."/>
            <person name="Stevens K."/>
            <person name="Taylor K."/>
            <person name="Whitehead S."/>
            <person name="Woodward J.R."/>
            <person name="Barrell B.G."/>
        </authorList>
    </citation>
    <scope>NUCLEOTIDE SEQUENCE [LARGE SCALE GENOMIC DNA]</scope>
    <source>
        <strain>TN</strain>
    </source>
</reference>
<gene>
    <name type="primary">ilvH</name>
    <name type="synonym">ilvN</name>
    <name type="ordered locus">ML1695</name>
    <name type="ORF">MLCB637.21</name>
</gene>
<feature type="chain" id="PRO_0000151415" description="Acetolactate synthase small subunit">
    <location>
        <begin position="1"/>
        <end position="169"/>
    </location>
</feature>
<feature type="domain" description="ACT" evidence="2">
    <location>
        <begin position="8"/>
        <end position="85"/>
    </location>
</feature>
<proteinExistence type="inferred from homology"/>
<accession>O33113</accession>
<keyword id="KW-0028">Amino-acid biosynthesis</keyword>
<keyword id="KW-0100">Branched-chain amino acid biosynthesis</keyword>
<keyword id="KW-1185">Reference proteome</keyword>
<keyword id="KW-0808">Transferase</keyword>
<name>ILVH_MYCLE</name>
<dbReference type="EC" id="2.2.1.6"/>
<dbReference type="EMBL" id="Z99263">
    <property type="protein sequence ID" value="CAB16436.1"/>
    <property type="molecule type" value="Genomic_DNA"/>
</dbReference>
<dbReference type="EMBL" id="AL583923">
    <property type="protein sequence ID" value="CAC30648.1"/>
    <property type="molecule type" value="Genomic_DNA"/>
</dbReference>
<dbReference type="PIR" id="T45414">
    <property type="entry name" value="T45414"/>
</dbReference>
<dbReference type="RefSeq" id="NP_302165.1">
    <property type="nucleotide sequence ID" value="NC_002677.1"/>
</dbReference>
<dbReference type="RefSeq" id="WP_010908486.1">
    <property type="nucleotide sequence ID" value="NC_002677.1"/>
</dbReference>
<dbReference type="SMR" id="O33113"/>
<dbReference type="STRING" id="272631.gene:17575540"/>
<dbReference type="KEGG" id="mle:ML1695"/>
<dbReference type="PATRIC" id="fig|272631.5.peg.3198"/>
<dbReference type="Leproma" id="ML1695"/>
<dbReference type="eggNOG" id="COG0440">
    <property type="taxonomic scope" value="Bacteria"/>
</dbReference>
<dbReference type="HOGENOM" id="CLU_055003_1_3_11"/>
<dbReference type="OrthoDB" id="9787365at2"/>
<dbReference type="UniPathway" id="UPA00047">
    <property type="reaction ID" value="UER00055"/>
</dbReference>
<dbReference type="UniPathway" id="UPA00049">
    <property type="reaction ID" value="UER00059"/>
</dbReference>
<dbReference type="Proteomes" id="UP000000806">
    <property type="component" value="Chromosome"/>
</dbReference>
<dbReference type="GO" id="GO:0005829">
    <property type="term" value="C:cytosol"/>
    <property type="evidence" value="ECO:0007669"/>
    <property type="project" value="TreeGrafter"/>
</dbReference>
<dbReference type="GO" id="GO:0003984">
    <property type="term" value="F:acetolactate synthase activity"/>
    <property type="evidence" value="ECO:0007669"/>
    <property type="project" value="UniProtKB-EC"/>
</dbReference>
<dbReference type="GO" id="GO:1990610">
    <property type="term" value="F:acetolactate synthase regulator activity"/>
    <property type="evidence" value="ECO:0007669"/>
    <property type="project" value="InterPro"/>
</dbReference>
<dbReference type="GO" id="GO:0009097">
    <property type="term" value="P:isoleucine biosynthetic process"/>
    <property type="evidence" value="ECO:0007669"/>
    <property type="project" value="UniProtKB-UniPathway"/>
</dbReference>
<dbReference type="GO" id="GO:0009099">
    <property type="term" value="P:L-valine biosynthetic process"/>
    <property type="evidence" value="ECO:0007669"/>
    <property type="project" value="UniProtKB-UniPathway"/>
</dbReference>
<dbReference type="CDD" id="cd04878">
    <property type="entry name" value="ACT_AHAS"/>
    <property type="match status" value="1"/>
</dbReference>
<dbReference type="FunFam" id="3.30.70.1150:FF:000001">
    <property type="entry name" value="Acetolactate synthase small subunit"/>
    <property type="match status" value="1"/>
</dbReference>
<dbReference type="FunFam" id="3.30.70.260:FF:000001">
    <property type="entry name" value="Acetolactate synthase, small subunit"/>
    <property type="match status" value="1"/>
</dbReference>
<dbReference type="Gene3D" id="3.30.70.260">
    <property type="match status" value="1"/>
</dbReference>
<dbReference type="Gene3D" id="3.30.70.1150">
    <property type="entry name" value="ACT-like. Chain A, domain 2"/>
    <property type="match status" value="1"/>
</dbReference>
<dbReference type="InterPro" id="IPR004789">
    <property type="entry name" value="Acetalactate_synth_ssu"/>
</dbReference>
<dbReference type="InterPro" id="IPR027271">
    <property type="entry name" value="Acetolactate_synth/TF_NikR_C"/>
</dbReference>
<dbReference type="InterPro" id="IPR019455">
    <property type="entry name" value="Acetolactate_synth_ssu_C"/>
</dbReference>
<dbReference type="InterPro" id="IPR045865">
    <property type="entry name" value="ACT-like_dom_sf"/>
</dbReference>
<dbReference type="InterPro" id="IPR002912">
    <property type="entry name" value="ACT_dom"/>
</dbReference>
<dbReference type="InterPro" id="IPR039557">
    <property type="entry name" value="AHAS_ACT"/>
</dbReference>
<dbReference type="InterPro" id="IPR054480">
    <property type="entry name" value="AHAS_small-like_ACT"/>
</dbReference>
<dbReference type="NCBIfam" id="TIGR00119">
    <property type="entry name" value="acolac_sm"/>
    <property type="match status" value="1"/>
</dbReference>
<dbReference type="NCBIfam" id="NF008864">
    <property type="entry name" value="PRK11895.1"/>
    <property type="match status" value="1"/>
</dbReference>
<dbReference type="PANTHER" id="PTHR30239">
    <property type="entry name" value="ACETOLACTATE SYNTHASE SMALL SUBUNIT"/>
    <property type="match status" value="1"/>
</dbReference>
<dbReference type="PANTHER" id="PTHR30239:SF0">
    <property type="entry name" value="ACETOLACTATE SYNTHASE SMALL SUBUNIT 1, CHLOROPLASTIC"/>
    <property type="match status" value="1"/>
</dbReference>
<dbReference type="Pfam" id="PF22629">
    <property type="entry name" value="ACT_AHAS_ss"/>
    <property type="match status" value="1"/>
</dbReference>
<dbReference type="Pfam" id="PF10369">
    <property type="entry name" value="ALS_ss_C"/>
    <property type="match status" value="1"/>
</dbReference>
<dbReference type="SUPFAM" id="SSF55021">
    <property type="entry name" value="ACT-like"/>
    <property type="match status" value="2"/>
</dbReference>
<dbReference type="PROSITE" id="PS51671">
    <property type="entry name" value="ACT"/>
    <property type="match status" value="1"/>
</dbReference>
<protein>
    <recommendedName>
        <fullName>Acetolactate synthase small subunit</fullName>
        <ecNumber>2.2.1.6</ecNumber>
    </recommendedName>
    <alternativeName>
        <fullName>Acetohydroxy-acid synthase small subunit</fullName>
        <shortName>AHAS</shortName>
        <shortName>ALS</shortName>
    </alternativeName>
</protein>
<comment type="catalytic activity">
    <reaction>
        <text>2 pyruvate + H(+) = (2S)-2-acetolactate + CO2</text>
        <dbReference type="Rhea" id="RHEA:25249"/>
        <dbReference type="ChEBI" id="CHEBI:15361"/>
        <dbReference type="ChEBI" id="CHEBI:15378"/>
        <dbReference type="ChEBI" id="CHEBI:16526"/>
        <dbReference type="ChEBI" id="CHEBI:58476"/>
        <dbReference type="EC" id="2.2.1.6"/>
    </reaction>
</comment>
<comment type="pathway">
    <text>Amino-acid biosynthesis; L-isoleucine biosynthesis; L-isoleucine from 2-oxobutanoate: step 1/4.</text>
</comment>
<comment type="pathway">
    <text>Amino-acid biosynthesis; L-valine biosynthesis; L-valine from pyruvate: step 1/4.</text>
</comment>
<comment type="subunit">
    <text evidence="1">Dimer of large and small chains.</text>
</comment>
<comment type="similarity">
    <text evidence="3">Belongs to the acetolactate synthase small subunit family.</text>
</comment>
<evidence type="ECO:0000250" key="1"/>
<evidence type="ECO:0000255" key="2">
    <source>
        <dbReference type="PROSITE-ProRule" id="PRU01007"/>
    </source>
</evidence>
<evidence type="ECO:0000305" key="3"/>
<organism>
    <name type="scientific">Mycobacterium leprae (strain TN)</name>
    <dbReference type="NCBI Taxonomy" id="272631"/>
    <lineage>
        <taxon>Bacteria</taxon>
        <taxon>Bacillati</taxon>
        <taxon>Actinomycetota</taxon>
        <taxon>Actinomycetes</taxon>
        <taxon>Mycobacteriales</taxon>
        <taxon>Mycobacteriaceae</taxon>
        <taxon>Mycobacterium</taxon>
    </lineage>
</organism>